<dbReference type="EC" id="7.1.1.-" evidence="5"/>
<dbReference type="EMBL" id="CM000129">
    <property type="protein sequence ID" value="EAY95001.1"/>
    <property type="molecule type" value="Genomic_DNA"/>
</dbReference>
<dbReference type="SMR" id="A2XVZ1"/>
<dbReference type="STRING" id="39946.A2XVZ1"/>
<dbReference type="EnsemblPlants" id="BGIOSGA016844-TA">
    <property type="protein sequence ID" value="BGIOSGA016844-PA"/>
    <property type="gene ID" value="BGIOSGA016844"/>
</dbReference>
<dbReference type="EnsemblPlants" id="OsGoSa_04g0021060.01">
    <property type="protein sequence ID" value="OsGoSa_04g0021060.01"/>
    <property type="gene ID" value="OsGoSa_04g0021060"/>
</dbReference>
<dbReference type="EnsemblPlants" id="OsIR64_04g0020650.01">
    <property type="protein sequence ID" value="OsIR64_04g0020650.01"/>
    <property type="gene ID" value="OsIR64_04g0020650"/>
</dbReference>
<dbReference type="EnsemblPlants" id="OsKYG_04g0020980.01">
    <property type="protein sequence ID" value="OsKYG_04g0020980.01"/>
    <property type="gene ID" value="OsKYG_04g0020980"/>
</dbReference>
<dbReference type="EnsemblPlants" id="OsLaMu_04g0021660.01">
    <property type="protein sequence ID" value="OsLaMu_04g0021660.01"/>
    <property type="gene ID" value="OsLaMu_04g0021660"/>
</dbReference>
<dbReference type="EnsemblPlants" id="OsLima_04g0021140.01">
    <property type="protein sequence ID" value="OsLima_04g0021140.01"/>
    <property type="gene ID" value="OsLima_04g0021140"/>
</dbReference>
<dbReference type="EnsemblPlants" id="OsLiXu_04g0021470.01">
    <property type="protein sequence ID" value="OsLiXu_04g0021470.01"/>
    <property type="gene ID" value="OsLiXu_04g0021470"/>
</dbReference>
<dbReference type="EnsemblPlants" id="OsMH63_04G022000_01">
    <property type="protein sequence ID" value="OsMH63_04G022000_01"/>
    <property type="gene ID" value="OsMH63_04G022000"/>
</dbReference>
<dbReference type="EnsemblPlants" id="OsPr106_04g0021840.01">
    <property type="protein sequence ID" value="OsPr106_04g0021840.01"/>
    <property type="gene ID" value="OsPr106_04g0021840"/>
</dbReference>
<dbReference type="EnsemblPlants" id="OsZS97_04G022030_01">
    <property type="protein sequence ID" value="OsZS97_04G022030_01"/>
    <property type="gene ID" value="OsZS97_04G022030"/>
</dbReference>
<dbReference type="Gramene" id="BGIOSGA016844-TA">
    <property type="protein sequence ID" value="BGIOSGA016844-PA"/>
    <property type="gene ID" value="BGIOSGA016844"/>
</dbReference>
<dbReference type="Gramene" id="OsGoSa_04g0021060.01">
    <property type="protein sequence ID" value="OsGoSa_04g0021060.01"/>
    <property type="gene ID" value="OsGoSa_04g0021060"/>
</dbReference>
<dbReference type="Gramene" id="OsIR64_04g0020650.01">
    <property type="protein sequence ID" value="OsIR64_04g0020650.01"/>
    <property type="gene ID" value="OsIR64_04g0020650"/>
</dbReference>
<dbReference type="Gramene" id="OsKYG_04g0020980.01">
    <property type="protein sequence ID" value="OsKYG_04g0020980.01"/>
    <property type="gene ID" value="OsKYG_04g0020980"/>
</dbReference>
<dbReference type="Gramene" id="OsLaMu_04g0021660.01">
    <property type="protein sequence ID" value="OsLaMu_04g0021660.01"/>
    <property type="gene ID" value="OsLaMu_04g0021660"/>
</dbReference>
<dbReference type="Gramene" id="OsLima_04g0021140.01">
    <property type="protein sequence ID" value="OsLima_04g0021140.01"/>
    <property type="gene ID" value="OsLima_04g0021140"/>
</dbReference>
<dbReference type="Gramene" id="OsLiXu_04g0021470.01">
    <property type="protein sequence ID" value="OsLiXu_04g0021470.01"/>
    <property type="gene ID" value="OsLiXu_04g0021470"/>
</dbReference>
<dbReference type="Gramene" id="OsMH63_04G022000_01">
    <property type="protein sequence ID" value="OsMH63_04G022000_01"/>
    <property type="gene ID" value="OsMH63_04G022000"/>
</dbReference>
<dbReference type="Gramene" id="OsPr106_04g0021840.01">
    <property type="protein sequence ID" value="OsPr106_04g0021840.01"/>
    <property type="gene ID" value="OsPr106_04g0021840"/>
</dbReference>
<dbReference type="Gramene" id="OsZS97_04G022030_01">
    <property type="protein sequence ID" value="OsZS97_04G022030_01"/>
    <property type="gene ID" value="OsZS97_04G022030"/>
</dbReference>
<dbReference type="HOGENOM" id="CLU_089187_0_0_1"/>
<dbReference type="OMA" id="YMASTHF"/>
<dbReference type="OrthoDB" id="2013483at2759"/>
<dbReference type="Proteomes" id="UP000007015">
    <property type="component" value="Chromosome 4"/>
</dbReference>
<dbReference type="GO" id="GO:0009535">
    <property type="term" value="C:chloroplast thylakoid membrane"/>
    <property type="evidence" value="ECO:0007669"/>
    <property type="project" value="UniProtKB-SubCell"/>
</dbReference>
<dbReference type="GO" id="GO:0016655">
    <property type="term" value="F:oxidoreductase activity, acting on NAD(P)H, quinone or similar compound as acceptor"/>
    <property type="evidence" value="ECO:0007669"/>
    <property type="project" value="InterPro"/>
</dbReference>
<dbReference type="GO" id="GO:0048038">
    <property type="term" value="F:quinone binding"/>
    <property type="evidence" value="ECO:0007669"/>
    <property type="project" value="UniProtKB-KW"/>
</dbReference>
<dbReference type="InterPro" id="IPR018922">
    <property type="entry name" value="NdhM"/>
</dbReference>
<dbReference type="PANTHER" id="PTHR36900">
    <property type="entry name" value="NAD(P)H-QUINONE OXIDOREDUCTASE SUBUNIT M, CHLOROPLASTIC"/>
    <property type="match status" value="1"/>
</dbReference>
<dbReference type="PANTHER" id="PTHR36900:SF1">
    <property type="entry name" value="NAD(P)H-QUINONE OXIDOREDUCTASE SUBUNIT M, CHLOROPLASTIC"/>
    <property type="match status" value="1"/>
</dbReference>
<dbReference type="Pfam" id="PF10664">
    <property type="entry name" value="NdhM"/>
    <property type="match status" value="1"/>
</dbReference>
<name>NDHM_ORYSI</name>
<proteinExistence type="inferred from homology"/>
<protein>
    <recommendedName>
        <fullName evidence="5">NAD(P)H-quinone oxidoreductase subunit M, chloroplastic</fullName>
        <ecNumber evidence="5">7.1.1.-</ecNumber>
    </recommendedName>
    <alternativeName>
        <fullName evidence="5">NAD(P)H dehydrogenase subunit M</fullName>
        <shortName evidence="5">NDH subunit M</shortName>
        <shortName evidence="1">NDH-M</shortName>
    </alternativeName>
    <alternativeName>
        <fullName evidence="5">NADH-plastoquinone oxidoreductase subunit M</fullName>
    </alternativeName>
</protein>
<evidence type="ECO:0000250" key="1">
    <source>
        <dbReference type="UniProtKB" id="Q2V2S7"/>
    </source>
</evidence>
<evidence type="ECO:0000250" key="2">
    <source>
        <dbReference type="UniProtKB" id="Q9CAC5"/>
    </source>
</evidence>
<evidence type="ECO:0000255" key="3"/>
<evidence type="ECO:0000256" key="4">
    <source>
        <dbReference type="SAM" id="MobiDB-lite"/>
    </source>
</evidence>
<evidence type="ECO:0000305" key="5"/>
<keyword id="KW-0150">Chloroplast</keyword>
<keyword id="KW-0472">Membrane</keyword>
<keyword id="KW-0520">NAD</keyword>
<keyword id="KW-0521">NADP</keyword>
<keyword id="KW-0934">Plastid</keyword>
<keyword id="KW-0618">Plastoquinone</keyword>
<keyword id="KW-0874">Quinone</keyword>
<keyword id="KW-1185">Reference proteome</keyword>
<keyword id="KW-0793">Thylakoid</keyword>
<keyword id="KW-0809">Transit peptide</keyword>
<keyword id="KW-1278">Translocase</keyword>
<keyword id="KW-0813">Transport</keyword>
<sequence length="220" mass="25665">MATTASPFLSPAKLSLERRLPRATWTARRSVRFPPVRAQDQQQQVKEEEEEAAVENLPPPPQEEEQRRERKTRRQGPAQPLPVQPLAESKNMSREYGGQWLSCTTRHIRIYAAYINPETNAFDQTQMDKLTLLLDPTDEFVWTDETCQKVYDEFQDLVDHYEGAELSEYTLRLIGSDLEHFIRKLLYDGEIKYNMMSRVLNFSMGKPRIKFNSSQIPDVK</sequence>
<feature type="transit peptide" description="Chloroplast" evidence="3">
    <location>
        <begin position="1"/>
        <end position="37"/>
    </location>
</feature>
<feature type="chain" id="PRO_0000352663" description="NAD(P)H-quinone oxidoreductase subunit M, chloroplastic">
    <location>
        <begin position="38"/>
        <end position="220"/>
    </location>
</feature>
<feature type="region of interest" description="Disordered" evidence="4">
    <location>
        <begin position="20"/>
        <end position="91"/>
    </location>
</feature>
<feature type="compositionally biased region" description="Low complexity" evidence="4">
    <location>
        <begin position="34"/>
        <end position="44"/>
    </location>
</feature>
<comment type="function">
    <text evidence="5">NDH shuttles electrons from NAD(P)H:plastoquinone, via FMN and iron-sulfur (Fe-S) centers, to quinones in the photosynthetic chain and possibly in a chloroplast respiratory chain. The immediate electron acceptor for the enzyme in this species is believed to be plastoquinone. Couples the redox reaction to proton translocation, and thus conserves the redox energy in a proton gradient.</text>
</comment>
<comment type="catalytic activity">
    <reaction evidence="5">
        <text>a plastoquinone + NADH + (n+1) H(+)(in) = a plastoquinol + NAD(+) + n H(+)(out)</text>
        <dbReference type="Rhea" id="RHEA:42608"/>
        <dbReference type="Rhea" id="RHEA-COMP:9561"/>
        <dbReference type="Rhea" id="RHEA-COMP:9562"/>
        <dbReference type="ChEBI" id="CHEBI:15378"/>
        <dbReference type="ChEBI" id="CHEBI:17757"/>
        <dbReference type="ChEBI" id="CHEBI:57540"/>
        <dbReference type="ChEBI" id="CHEBI:57945"/>
        <dbReference type="ChEBI" id="CHEBI:62192"/>
    </reaction>
</comment>
<comment type="catalytic activity">
    <reaction evidence="5">
        <text>a plastoquinone + NADPH + (n+1) H(+)(in) = a plastoquinol + NADP(+) + n H(+)(out)</text>
        <dbReference type="Rhea" id="RHEA:42612"/>
        <dbReference type="Rhea" id="RHEA-COMP:9561"/>
        <dbReference type="Rhea" id="RHEA-COMP:9562"/>
        <dbReference type="ChEBI" id="CHEBI:15378"/>
        <dbReference type="ChEBI" id="CHEBI:17757"/>
        <dbReference type="ChEBI" id="CHEBI:57783"/>
        <dbReference type="ChEBI" id="CHEBI:58349"/>
        <dbReference type="ChEBI" id="CHEBI:62192"/>
    </reaction>
</comment>
<comment type="subunit">
    <text evidence="1">Part of the chloroplast NDH complex, composed of a mixture of chloroplast and nucleus encoded subunits. Component of the NDH subcomplex A, at least composed of ndhH, ndhI, ndhJ, ndhK, ndhL, ndhM, ndhN and ndhO.</text>
</comment>
<comment type="subcellular location">
    <subcellularLocation>
        <location evidence="2">Plastid</location>
        <location evidence="2">Chloroplast thylakoid membrane</location>
        <topology evidence="5">Peripheral membrane protein</topology>
        <orientation evidence="5">Stromal side</orientation>
    </subcellularLocation>
</comment>
<comment type="similarity">
    <text evidence="5">Belongs to the NDH complex subunit M family.</text>
</comment>
<reference key="1">
    <citation type="journal article" date="2005" name="PLoS Biol.">
        <title>The genomes of Oryza sativa: a history of duplications.</title>
        <authorList>
            <person name="Yu J."/>
            <person name="Wang J."/>
            <person name="Lin W."/>
            <person name="Li S."/>
            <person name="Li H."/>
            <person name="Zhou J."/>
            <person name="Ni P."/>
            <person name="Dong W."/>
            <person name="Hu S."/>
            <person name="Zeng C."/>
            <person name="Zhang J."/>
            <person name="Zhang Y."/>
            <person name="Li R."/>
            <person name="Xu Z."/>
            <person name="Li S."/>
            <person name="Li X."/>
            <person name="Zheng H."/>
            <person name="Cong L."/>
            <person name="Lin L."/>
            <person name="Yin J."/>
            <person name="Geng J."/>
            <person name="Li G."/>
            <person name="Shi J."/>
            <person name="Liu J."/>
            <person name="Lv H."/>
            <person name="Li J."/>
            <person name="Wang J."/>
            <person name="Deng Y."/>
            <person name="Ran L."/>
            <person name="Shi X."/>
            <person name="Wang X."/>
            <person name="Wu Q."/>
            <person name="Li C."/>
            <person name="Ren X."/>
            <person name="Wang J."/>
            <person name="Wang X."/>
            <person name="Li D."/>
            <person name="Liu D."/>
            <person name="Zhang X."/>
            <person name="Ji Z."/>
            <person name="Zhao W."/>
            <person name="Sun Y."/>
            <person name="Zhang Z."/>
            <person name="Bao J."/>
            <person name="Han Y."/>
            <person name="Dong L."/>
            <person name="Ji J."/>
            <person name="Chen P."/>
            <person name="Wu S."/>
            <person name="Liu J."/>
            <person name="Xiao Y."/>
            <person name="Bu D."/>
            <person name="Tan J."/>
            <person name="Yang L."/>
            <person name="Ye C."/>
            <person name="Zhang J."/>
            <person name="Xu J."/>
            <person name="Zhou Y."/>
            <person name="Yu Y."/>
            <person name="Zhang B."/>
            <person name="Zhuang S."/>
            <person name="Wei H."/>
            <person name="Liu B."/>
            <person name="Lei M."/>
            <person name="Yu H."/>
            <person name="Li Y."/>
            <person name="Xu H."/>
            <person name="Wei S."/>
            <person name="He X."/>
            <person name="Fang L."/>
            <person name="Zhang Z."/>
            <person name="Zhang Y."/>
            <person name="Huang X."/>
            <person name="Su Z."/>
            <person name="Tong W."/>
            <person name="Li J."/>
            <person name="Tong Z."/>
            <person name="Li S."/>
            <person name="Ye J."/>
            <person name="Wang L."/>
            <person name="Fang L."/>
            <person name="Lei T."/>
            <person name="Chen C.-S."/>
            <person name="Chen H.-C."/>
            <person name="Xu Z."/>
            <person name="Li H."/>
            <person name="Huang H."/>
            <person name="Zhang F."/>
            <person name="Xu H."/>
            <person name="Li N."/>
            <person name="Zhao C."/>
            <person name="Li S."/>
            <person name="Dong L."/>
            <person name="Huang Y."/>
            <person name="Li L."/>
            <person name="Xi Y."/>
            <person name="Qi Q."/>
            <person name="Li W."/>
            <person name="Zhang B."/>
            <person name="Hu W."/>
            <person name="Zhang Y."/>
            <person name="Tian X."/>
            <person name="Jiao Y."/>
            <person name="Liang X."/>
            <person name="Jin J."/>
            <person name="Gao L."/>
            <person name="Zheng W."/>
            <person name="Hao B."/>
            <person name="Liu S.-M."/>
            <person name="Wang W."/>
            <person name="Yuan L."/>
            <person name="Cao M."/>
            <person name="McDermott J."/>
            <person name="Samudrala R."/>
            <person name="Wang J."/>
            <person name="Wong G.K.-S."/>
            <person name="Yang H."/>
        </authorList>
    </citation>
    <scope>NUCLEOTIDE SEQUENCE [LARGE SCALE GENOMIC DNA]</scope>
    <source>
        <strain>cv. 93-11</strain>
    </source>
</reference>
<organism>
    <name type="scientific">Oryza sativa subsp. indica</name>
    <name type="common">Rice</name>
    <dbReference type="NCBI Taxonomy" id="39946"/>
    <lineage>
        <taxon>Eukaryota</taxon>
        <taxon>Viridiplantae</taxon>
        <taxon>Streptophyta</taxon>
        <taxon>Embryophyta</taxon>
        <taxon>Tracheophyta</taxon>
        <taxon>Spermatophyta</taxon>
        <taxon>Magnoliopsida</taxon>
        <taxon>Liliopsida</taxon>
        <taxon>Poales</taxon>
        <taxon>Poaceae</taxon>
        <taxon>BOP clade</taxon>
        <taxon>Oryzoideae</taxon>
        <taxon>Oryzeae</taxon>
        <taxon>Oryzinae</taxon>
        <taxon>Oryza</taxon>
        <taxon>Oryza sativa</taxon>
    </lineage>
</organism>
<gene>
    <name evidence="5" type="primary">ndhM</name>
    <name evidence="1" type="synonym">NDH-M</name>
    <name type="ORF">OsI_016234</name>
</gene>
<accession>A2XVZ1</accession>